<feature type="chain" id="PRO_0000443120" description="Golgin subfamily A member 6-like protein 7">
    <location>
        <begin position="1"/>
        <end position="622"/>
    </location>
</feature>
<feature type="region of interest" description="Disordered" evidence="2">
    <location>
        <begin position="1"/>
        <end position="82"/>
    </location>
</feature>
<feature type="region of interest" description="Disordered" evidence="2">
    <location>
        <begin position="251"/>
        <end position="496"/>
    </location>
</feature>
<feature type="region of interest" description="Disordered" evidence="2">
    <location>
        <begin position="511"/>
        <end position="580"/>
    </location>
</feature>
<feature type="coiled-coil region" evidence="1">
    <location>
        <begin position="100"/>
        <end position="534"/>
    </location>
</feature>
<feature type="compositionally biased region" description="Basic and acidic residues" evidence="2">
    <location>
        <begin position="57"/>
        <end position="74"/>
    </location>
</feature>
<feature type="compositionally biased region" description="Basic and acidic residues" evidence="2">
    <location>
        <begin position="251"/>
        <end position="275"/>
    </location>
</feature>
<feature type="compositionally biased region" description="Basic and acidic residues" evidence="2">
    <location>
        <begin position="283"/>
        <end position="332"/>
    </location>
</feature>
<feature type="compositionally biased region" description="Basic and acidic residues" evidence="2">
    <location>
        <begin position="339"/>
        <end position="367"/>
    </location>
</feature>
<feature type="compositionally biased region" description="Basic and acidic residues" evidence="2">
    <location>
        <begin position="374"/>
        <end position="388"/>
    </location>
</feature>
<feature type="compositionally biased region" description="Basic and acidic residues" evidence="2">
    <location>
        <begin position="395"/>
        <end position="420"/>
    </location>
</feature>
<feature type="compositionally biased region" description="Acidic residues" evidence="2">
    <location>
        <begin position="477"/>
        <end position="489"/>
    </location>
</feature>
<feature type="compositionally biased region" description="Basic and acidic residues" evidence="2">
    <location>
        <begin position="511"/>
        <end position="546"/>
    </location>
</feature>
<feature type="compositionally biased region" description="Basic and acidic residues" evidence="2">
    <location>
        <begin position="567"/>
        <end position="580"/>
    </location>
</feature>
<reference key="1">
    <citation type="journal article" date="2006" name="Nature">
        <title>Analysis of the DNA sequence and duplication history of human chromosome 15.</title>
        <authorList>
            <person name="Zody M.C."/>
            <person name="Garber M."/>
            <person name="Sharpe T."/>
            <person name="Young S.K."/>
            <person name="Rowen L."/>
            <person name="O'Neill K."/>
            <person name="Whittaker C.A."/>
            <person name="Kamal M."/>
            <person name="Chang J.L."/>
            <person name="Cuomo C.A."/>
            <person name="Dewar K."/>
            <person name="FitzGerald M.G."/>
            <person name="Kodira C.D."/>
            <person name="Madan A."/>
            <person name="Qin S."/>
            <person name="Yang X."/>
            <person name="Abbasi N."/>
            <person name="Abouelleil A."/>
            <person name="Arachchi H.M."/>
            <person name="Baradarani L."/>
            <person name="Birditt B."/>
            <person name="Bloom S."/>
            <person name="Bloom T."/>
            <person name="Borowsky M.L."/>
            <person name="Burke J."/>
            <person name="Butler J."/>
            <person name="Cook A."/>
            <person name="DeArellano K."/>
            <person name="DeCaprio D."/>
            <person name="Dorris L. III"/>
            <person name="Dors M."/>
            <person name="Eichler E.E."/>
            <person name="Engels R."/>
            <person name="Fahey J."/>
            <person name="Fleetwood P."/>
            <person name="Friedman C."/>
            <person name="Gearin G."/>
            <person name="Hall J.L."/>
            <person name="Hensley G."/>
            <person name="Johnson E."/>
            <person name="Jones C."/>
            <person name="Kamat A."/>
            <person name="Kaur A."/>
            <person name="Locke D.P."/>
            <person name="Madan A."/>
            <person name="Munson G."/>
            <person name="Jaffe D.B."/>
            <person name="Lui A."/>
            <person name="Macdonald P."/>
            <person name="Mauceli E."/>
            <person name="Naylor J.W."/>
            <person name="Nesbitt R."/>
            <person name="Nicol R."/>
            <person name="O'Leary S.B."/>
            <person name="Ratcliffe A."/>
            <person name="Rounsley S."/>
            <person name="She X."/>
            <person name="Sneddon K.M.B."/>
            <person name="Stewart S."/>
            <person name="Sougnez C."/>
            <person name="Stone S.M."/>
            <person name="Topham K."/>
            <person name="Vincent D."/>
            <person name="Wang S."/>
            <person name="Zimmer A.R."/>
            <person name="Birren B.W."/>
            <person name="Hood L."/>
            <person name="Lander E.S."/>
            <person name="Nusbaum C."/>
        </authorList>
    </citation>
    <scope>NUCLEOTIDE SEQUENCE [LARGE SCALE GENOMIC DNA]</scope>
</reference>
<name>GG6L7_HUMAN</name>
<dbReference type="EMBL" id="AC055876">
    <property type="status" value="NOT_ANNOTATED_CDS"/>
    <property type="molecule type" value="Genomic_DNA"/>
</dbReference>
<dbReference type="CCDS" id="CCDS91969.1"/>
<dbReference type="RefSeq" id="NP_001352300.1">
    <property type="nucleotide sequence ID" value="NM_001365371.2"/>
</dbReference>
<dbReference type="SMR" id="A0A1B0GV03"/>
<dbReference type="STRING" id="9606.ENSP00000490318"/>
<dbReference type="BioMuta" id="GOLGA6L7"/>
<dbReference type="MassIVE" id="A0A1B0GV03"/>
<dbReference type="PeptideAtlas" id="A0A1B0GV03"/>
<dbReference type="Ensembl" id="ENST00000567390.7">
    <property type="protein sequence ID" value="ENSP00000490318.1"/>
    <property type="gene ID" value="ENSG00000261649.7"/>
</dbReference>
<dbReference type="GeneID" id="728310"/>
<dbReference type="MANE-Select" id="ENST00000567390.7">
    <property type="protein sequence ID" value="ENSP00000490318.1"/>
    <property type="RefSeq nucleotide sequence ID" value="NM_001365371.2"/>
    <property type="RefSeq protein sequence ID" value="NP_001352300.1"/>
</dbReference>
<dbReference type="AGR" id="HGNC:37442"/>
<dbReference type="GeneCards" id="GOLGA6L7"/>
<dbReference type="HGNC" id="HGNC:37442">
    <property type="gene designation" value="GOLGA6L7"/>
</dbReference>
<dbReference type="HPA" id="ENSG00000261649">
    <property type="expression patterns" value="Tissue enriched (testis)"/>
</dbReference>
<dbReference type="neXtProt" id="NX_A0A1B0GV03"/>
<dbReference type="OpenTargets" id="ENSG00000261649"/>
<dbReference type="VEuPathDB" id="HostDB:ENSG00000261649"/>
<dbReference type="GeneTree" id="ENSGT00940000163338"/>
<dbReference type="InParanoid" id="A0A1B0GV03"/>
<dbReference type="OMA" id="WDEYEKM"/>
<dbReference type="OrthoDB" id="9540182at2759"/>
<dbReference type="PAN-GO" id="A0A1B0GV03">
    <property type="GO annotations" value="0 GO annotations based on evolutionary models"/>
</dbReference>
<dbReference type="Pharos" id="A0A1B0GV03">
    <property type="development level" value="Tdark"/>
</dbReference>
<dbReference type="PRO" id="PR:A0A1B0GV03"/>
<dbReference type="Proteomes" id="UP000005640">
    <property type="component" value="Chromosome 15"/>
</dbReference>
<dbReference type="RNAct" id="A0A1B0GV03">
    <property type="molecule type" value="protein"/>
</dbReference>
<dbReference type="Bgee" id="ENSG00000261649">
    <property type="expression patterns" value="Expressed in left testis and 91 other cell types or tissues"/>
</dbReference>
<dbReference type="GO" id="GO:0005801">
    <property type="term" value="C:cis-Golgi network"/>
    <property type="evidence" value="ECO:0007669"/>
    <property type="project" value="InterPro"/>
</dbReference>
<dbReference type="InterPro" id="IPR043937">
    <property type="entry name" value="GM130_C"/>
</dbReference>
<dbReference type="InterPro" id="IPR026737">
    <property type="entry name" value="GOLGA6L"/>
</dbReference>
<dbReference type="PANTHER" id="PTHR23143:SF28">
    <property type="entry name" value="GOLGIN SUBFAMILY A MEMBER 6-LIKE PROTEIN 2"/>
    <property type="match status" value="1"/>
</dbReference>
<dbReference type="PANTHER" id="PTHR23143">
    <property type="entry name" value="TRICHOHYALIN-RELATED"/>
    <property type="match status" value="1"/>
</dbReference>
<dbReference type="Pfam" id="PF19046">
    <property type="entry name" value="GM130_C"/>
    <property type="match status" value="1"/>
</dbReference>
<gene>
    <name evidence="4" type="primary">GOLGA6L7</name>
</gene>
<evidence type="ECO:0000255" key="1"/>
<evidence type="ECO:0000256" key="2">
    <source>
        <dbReference type="SAM" id="MobiDB-lite"/>
    </source>
</evidence>
<evidence type="ECO:0000305" key="3"/>
<evidence type="ECO:0000312" key="4">
    <source>
        <dbReference type="HGNC" id="HGNC:37442"/>
    </source>
</evidence>
<comment type="similarity">
    <text evidence="3">Belongs to the GOLGA6 family.</text>
</comment>
<accession>A0A1B0GV03</accession>
<proteinExistence type="evidence at protein level"/>
<organism>
    <name type="scientific">Homo sapiens</name>
    <name type="common">Human</name>
    <dbReference type="NCBI Taxonomy" id="9606"/>
    <lineage>
        <taxon>Eukaryota</taxon>
        <taxon>Metazoa</taxon>
        <taxon>Chordata</taxon>
        <taxon>Craniata</taxon>
        <taxon>Vertebrata</taxon>
        <taxon>Euteleostomi</taxon>
        <taxon>Mammalia</taxon>
        <taxon>Eutheria</taxon>
        <taxon>Euarchontoglires</taxon>
        <taxon>Primates</taxon>
        <taxon>Haplorrhini</taxon>
        <taxon>Catarrhini</taxon>
        <taxon>Hominidae</taxon>
        <taxon>Homo</taxon>
    </lineage>
</organism>
<sequence>MMSEKTQQRKLAGTKKKFTDYHQWNSAGVGTGATDTKKKKINHGANPETTTSGGCHSPEDKQQNRAQLKEENKASHQHQQALRRQLEAQDHTIRILMCQKTELETALHDSQDAARKFEEDSKDLAARLHHSWHFAGELQRALSAMSAEHERADKYIKELTKEREAMSLELFRNIITNKELKEKNAELQEKLRLVETEKSEIQLHIKELKRKLETDKIPLPQVQTNTLQEKMWRQEEELRDQEELRDQEKLRKHEEKMWRQEQRLRDQEKELREQEQQMQEQEEQMRKQEEQMRKQEEQMRKQEEQMRKQEEQMRKQEEQMRKQEEQMGKQEEQMGEQEEQMRKQEKQMLKQKEQMRKQEEQMWKQEEQIGEQEEQMRKQEEQMWKQEEQIGEQEEQMRKQEEQMWKQEEQMGEQMRKQEEQMGEQEEQIRKQEEQMGEQEEQMRKQEEQMGEQEEQMRKQEEQMGEQEEQMRKQEEQMGEQEEQMGEQEEQMRKQVERLQFKEERLWDEYEKMQEEEEKIRRQVEKRREKKERMGEQEKTQEERCSEPCLPPSKYPSDMSHPGSLEPAREAGKGYSHDNRTAQIMQLPPGMKNAQERPGLGSTSCIPFFYGGDKKKIKIISI</sequence>
<keyword id="KW-0175">Coiled coil</keyword>
<keyword id="KW-1267">Proteomics identification</keyword>
<keyword id="KW-1185">Reference proteome</keyword>
<protein>
    <recommendedName>
        <fullName evidence="3">Golgin subfamily A member 6-like protein 7</fullName>
    </recommendedName>
</protein>